<name>MSBA_POLSJ</name>
<comment type="function">
    <text evidence="1">Involved in lipopolysaccharide (LPS) biosynthesis. Translocates lipid A-core from the inner to the outer leaflet of the inner membrane. Transmembrane domains (TMD) form a pore in the inner membrane and the ATP-binding domain (NBD) is responsible for energy generation.</text>
</comment>
<comment type="catalytic activity">
    <reaction evidence="1">
        <text>ATP + H2O + lipid A-core oligosaccharideSide 1 = ADP + phosphate + lipid A-core oligosaccharideSide 2.</text>
        <dbReference type="EC" id="7.5.2.6"/>
    </reaction>
</comment>
<comment type="subunit">
    <text evidence="1">Homodimer.</text>
</comment>
<comment type="subcellular location">
    <subcellularLocation>
        <location evidence="1">Cell inner membrane</location>
        <topology evidence="1">Multi-pass membrane protein</topology>
    </subcellularLocation>
</comment>
<comment type="domain">
    <text evidence="1">In MsbA the ATP-binding domain (NBD) and the transmembrane domain (TMD) are fused.</text>
</comment>
<comment type="similarity">
    <text evidence="1">Belongs to the ABC transporter superfamily. Lipid exporter (TC 3.A.1.106) family.</text>
</comment>
<dbReference type="EC" id="7.5.2.6" evidence="1"/>
<dbReference type="EMBL" id="CP000316">
    <property type="protein sequence ID" value="ABE43909.1"/>
    <property type="molecule type" value="Genomic_DNA"/>
</dbReference>
<dbReference type="RefSeq" id="WP_011482908.1">
    <property type="nucleotide sequence ID" value="NC_007948.1"/>
</dbReference>
<dbReference type="SMR" id="Q12C33"/>
<dbReference type="STRING" id="296591.Bpro_1979"/>
<dbReference type="KEGG" id="pol:Bpro_1979"/>
<dbReference type="eggNOG" id="COG1132">
    <property type="taxonomic scope" value="Bacteria"/>
</dbReference>
<dbReference type="HOGENOM" id="CLU_000604_84_4_4"/>
<dbReference type="OrthoDB" id="8554730at2"/>
<dbReference type="Proteomes" id="UP000001983">
    <property type="component" value="Chromosome"/>
</dbReference>
<dbReference type="GO" id="GO:0005886">
    <property type="term" value="C:plasma membrane"/>
    <property type="evidence" value="ECO:0007669"/>
    <property type="project" value="UniProtKB-SubCell"/>
</dbReference>
<dbReference type="GO" id="GO:0015421">
    <property type="term" value="F:ABC-type oligopeptide transporter activity"/>
    <property type="evidence" value="ECO:0007669"/>
    <property type="project" value="TreeGrafter"/>
</dbReference>
<dbReference type="GO" id="GO:0005524">
    <property type="term" value="F:ATP binding"/>
    <property type="evidence" value="ECO:0007669"/>
    <property type="project" value="UniProtKB-KW"/>
</dbReference>
<dbReference type="GO" id="GO:0016887">
    <property type="term" value="F:ATP hydrolysis activity"/>
    <property type="evidence" value="ECO:0007669"/>
    <property type="project" value="InterPro"/>
</dbReference>
<dbReference type="GO" id="GO:0034040">
    <property type="term" value="F:ATPase-coupled lipid transmembrane transporter activity"/>
    <property type="evidence" value="ECO:0007669"/>
    <property type="project" value="InterPro"/>
</dbReference>
<dbReference type="CDD" id="cd18552">
    <property type="entry name" value="ABC_6TM_MsbA_like"/>
    <property type="match status" value="1"/>
</dbReference>
<dbReference type="FunFam" id="3.40.50.300:FF:000221">
    <property type="entry name" value="Multidrug ABC transporter ATP-binding protein"/>
    <property type="match status" value="1"/>
</dbReference>
<dbReference type="Gene3D" id="1.20.1560.10">
    <property type="entry name" value="ABC transporter type 1, transmembrane domain"/>
    <property type="match status" value="1"/>
</dbReference>
<dbReference type="Gene3D" id="3.40.50.300">
    <property type="entry name" value="P-loop containing nucleotide triphosphate hydrolases"/>
    <property type="match status" value="1"/>
</dbReference>
<dbReference type="InterPro" id="IPR003593">
    <property type="entry name" value="AAA+_ATPase"/>
</dbReference>
<dbReference type="InterPro" id="IPR011527">
    <property type="entry name" value="ABC1_TM_dom"/>
</dbReference>
<dbReference type="InterPro" id="IPR036640">
    <property type="entry name" value="ABC1_TM_sf"/>
</dbReference>
<dbReference type="InterPro" id="IPR003439">
    <property type="entry name" value="ABC_transporter-like_ATP-bd"/>
</dbReference>
<dbReference type="InterPro" id="IPR017871">
    <property type="entry name" value="ABC_transporter-like_CS"/>
</dbReference>
<dbReference type="InterPro" id="IPR011917">
    <property type="entry name" value="ABC_transpr_lipidA"/>
</dbReference>
<dbReference type="InterPro" id="IPR027417">
    <property type="entry name" value="P-loop_NTPase"/>
</dbReference>
<dbReference type="InterPro" id="IPR039421">
    <property type="entry name" value="Type_1_exporter"/>
</dbReference>
<dbReference type="NCBIfam" id="TIGR02203">
    <property type="entry name" value="MsbA_lipidA"/>
    <property type="match status" value="1"/>
</dbReference>
<dbReference type="PANTHER" id="PTHR43394:SF1">
    <property type="entry name" value="ATP-BINDING CASSETTE SUB-FAMILY B MEMBER 10, MITOCHONDRIAL"/>
    <property type="match status" value="1"/>
</dbReference>
<dbReference type="PANTHER" id="PTHR43394">
    <property type="entry name" value="ATP-DEPENDENT PERMEASE MDL1, MITOCHONDRIAL"/>
    <property type="match status" value="1"/>
</dbReference>
<dbReference type="Pfam" id="PF00664">
    <property type="entry name" value="ABC_membrane"/>
    <property type="match status" value="1"/>
</dbReference>
<dbReference type="Pfam" id="PF00005">
    <property type="entry name" value="ABC_tran"/>
    <property type="match status" value="1"/>
</dbReference>
<dbReference type="SMART" id="SM00382">
    <property type="entry name" value="AAA"/>
    <property type="match status" value="1"/>
</dbReference>
<dbReference type="SUPFAM" id="SSF90123">
    <property type="entry name" value="ABC transporter transmembrane region"/>
    <property type="match status" value="1"/>
</dbReference>
<dbReference type="SUPFAM" id="SSF52540">
    <property type="entry name" value="P-loop containing nucleoside triphosphate hydrolases"/>
    <property type="match status" value="1"/>
</dbReference>
<dbReference type="PROSITE" id="PS50929">
    <property type="entry name" value="ABC_TM1F"/>
    <property type="match status" value="1"/>
</dbReference>
<dbReference type="PROSITE" id="PS00211">
    <property type="entry name" value="ABC_TRANSPORTER_1"/>
    <property type="match status" value="1"/>
</dbReference>
<dbReference type="PROSITE" id="PS50893">
    <property type="entry name" value="ABC_TRANSPORTER_2"/>
    <property type="match status" value="1"/>
</dbReference>
<dbReference type="PROSITE" id="PS51239">
    <property type="entry name" value="MSBA"/>
    <property type="match status" value="1"/>
</dbReference>
<organism>
    <name type="scientific">Polaromonas sp. (strain JS666 / ATCC BAA-500)</name>
    <dbReference type="NCBI Taxonomy" id="296591"/>
    <lineage>
        <taxon>Bacteria</taxon>
        <taxon>Pseudomonadati</taxon>
        <taxon>Pseudomonadota</taxon>
        <taxon>Betaproteobacteria</taxon>
        <taxon>Burkholderiales</taxon>
        <taxon>Comamonadaceae</taxon>
        <taxon>Polaromonas</taxon>
    </lineage>
</organism>
<sequence length="589" mass="63309">MTQLSEPVPVSLAARRSLWQRVARVWPYFSGSRAGWALAIGATIVASATEPFVPALLKPLLDRGFQRDSFNLWLVPLALMLLFTVRGLSGFLAQFALAKVTNDGLLKLRGAMFDKLLSARLTLFADQSSSAIANTVVYEVFNGSSMLINAIMKLARDVLTLLALIGYLVYLNWKLMLVVALLFPAVAFVIQVLSKRLYRLTKESQTATDDLAYVVEENVMAHRDVRLHGAQAGQASRFNHLSNSLRRLSMKSTAAYAGMSAITQVLAAMALSAVISIALLQSAENTTTVGGFVAFVTAMLLLIAPVKSLSDAATPVTRGLAALERGLDLMNLTPDESGGSFVKARAHGDIEFADVSVIYKADAAAALDQFSLSIKAGETLAIVGASGSGKTTLVNLLPRFVEMSSGNIYLDGQDLRAWNLASLRAQFAFVSQHVVMLNNSIAVNVALGQPVDRARVTECLAAANLSGLLAELPGGIDTILGHNAMQLSGGQRQRLAIARALYKNAPILVLDEATSALDTESELAVQEAIKRLTASRTSLVIAHRLSTVQHADRIIMMEAGRMIESGTHAELLARNGAYAHLYRLGFRNT</sequence>
<reference key="1">
    <citation type="journal article" date="2008" name="Appl. Environ. Microbiol.">
        <title>The genome of Polaromonas sp. strain JS666: insights into the evolution of a hydrocarbon- and xenobiotic-degrading bacterium, and features of relevance to biotechnology.</title>
        <authorList>
            <person name="Mattes T.E."/>
            <person name="Alexander A.K."/>
            <person name="Richardson P.M."/>
            <person name="Munk A.C."/>
            <person name="Han C.S."/>
            <person name="Stothard P."/>
            <person name="Coleman N.V."/>
        </authorList>
    </citation>
    <scope>NUCLEOTIDE SEQUENCE [LARGE SCALE GENOMIC DNA]</scope>
    <source>
        <strain>JS666 / ATCC BAA-500</strain>
    </source>
</reference>
<evidence type="ECO:0000255" key="1">
    <source>
        <dbReference type="HAMAP-Rule" id="MF_01703"/>
    </source>
</evidence>
<keyword id="KW-0067">ATP-binding</keyword>
<keyword id="KW-0997">Cell inner membrane</keyword>
<keyword id="KW-1003">Cell membrane</keyword>
<keyword id="KW-0445">Lipid transport</keyword>
<keyword id="KW-0472">Membrane</keyword>
<keyword id="KW-0547">Nucleotide-binding</keyword>
<keyword id="KW-1185">Reference proteome</keyword>
<keyword id="KW-1278">Translocase</keyword>
<keyword id="KW-0812">Transmembrane</keyword>
<keyword id="KW-1133">Transmembrane helix</keyword>
<keyword id="KW-0813">Transport</keyword>
<proteinExistence type="inferred from homology"/>
<protein>
    <recommendedName>
        <fullName evidence="1">ATP-dependent lipid A-core flippase</fullName>
        <ecNumber evidence="1">7.5.2.6</ecNumber>
    </recommendedName>
    <alternativeName>
        <fullName evidence="1">Lipid A export ATP-binding/permease protein MsbA</fullName>
    </alternativeName>
</protein>
<feature type="chain" id="PRO_0000271637" description="ATP-dependent lipid A-core flippase">
    <location>
        <begin position="1"/>
        <end position="589"/>
    </location>
</feature>
<feature type="transmembrane region" description="Helical" evidence="1">
    <location>
        <begin position="37"/>
        <end position="57"/>
    </location>
</feature>
<feature type="transmembrane region" description="Helical" evidence="1">
    <location>
        <begin position="72"/>
        <end position="92"/>
    </location>
</feature>
<feature type="transmembrane region" description="Helical" evidence="1">
    <location>
        <begin position="151"/>
        <end position="171"/>
    </location>
</feature>
<feature type="transmembrane region" description="Helical" evidence="1">
    <location>
        <begin position="173"/>
        <end position="193"/>
    </location>
</feature>
<feature type="transmembrane region" description="Helical" evidence="1">
    <location>
        <begin position="260"/>
        <end position="280"/>
    </location>
</feature>
<feature type="transmembrane region" description="Helical" evidence="1">
    <location>
        <begin position="286"/>
        <end position="306"/>
    </location>
</feature>
<feature type="domain" description="ABC transmembrane type-1" evidence="1">
    <location>
        <begin position="37"/>
        <end position="318"/>
    </location>
</feature>
<feature type="domain" description="ABC transporter" evidence="1">
    <location>
        <begin position="350"/>
        <end position="584"/>
    </location>
</feature>
<feature type="binding site" evidence="1">
    <location>
        <begin position="384"/>
        <end position="391"/>
    </location>
    <ligand>
        <name>ATP</name>
        <dbReference type="ChEBI" id="CHEBI:30616"/>
    </ligand>
</feature>
<gene>
    <name evidence="1" type="primary">msbA</name>
    <name type="ordered locus">Bpro_1979</name>
</gene>
<accession>Q12C33</accession>